<reference key="1">
    <citation type="journal article" date="2008" name="PLoS ONE">
        <title>Genome sequence of a lancefield group C Streptococcus zooepidemicus strain causing epidemic nephritis: new information about an old disease.</title>
        <authorList>
            <person name="Beres S.B."/>
            <person name="Sesso R."/>
            <person name="Pinto S.W.L."/>
            <person name="Hoe N.P."/>
            <person name="Porcella S.F."/>
            <person name="Deleo F.R."/>
            <person name="Musser J.M."/>
        </authorList>
    </citation>
    <scope>NUCLEOTIDE SEQUENCE [LARGE SCALE GENOMIC DNA]</scope>
    <source>
        <strain>MGCS10565</strain>
    </source>
</reference>
<keyword id="KW-0067">ATP-binding</keyword>
<keyword id="KW-0963">Cytoplasm</keyword>
<keyword id="KW-0227">DNA damage</keyword>
<keyword id="KW-0228">DNA excision</keyword>
<keyword id="KW-0234">DNA repair</keyword>
<keyword id="KW-0267">Excision nuclease</keyword>
<keyword id="KW-0347">Helicase</keyword>
<keyword id="KW-0378">Hydrolase</keyword>
<keyword id="KW-0547">Nucleotide-binding</keyword>
<keyword id="KW-0742">SOS response</keyword>
<comment type="function">
    <text evidence="1">The UvrABC repair system catalyzes the recognition and processing of DNA lesions. A damage recognition complex composed of 2 UvrA and 2 UvrB subunits scans DNA for abnormalities. Upon binding of the UvrA(2)B(2) complex to a putative damaged site, the DNA wraps around one UvrB monomer. DNA wrap is dependent on ATP binding by UvrB and probably causes local melting of the DNA helix, facilitating insertion of UvrB beta-hairpin between the DNA strands. Then UvrB probes one DNA strand for the presence of a lesion. If a lesion is found the UvrA subunits dissociate and the UvrB-DNA preincision complex is formed. This complex is subsequently bound by UvrC and the second UvrB is released. If no lesion is found, the DNA wraps around the other UvrB subunit that will check the other stand for damage.</text>
</comment>
<comment type="subunit">
    <text evidence="1">Forms a heterotetramer with UvrA during the search for lesions. Interacts with UvrC in an incision complex.</text>
</comment>
<comment type="subcellular location">
    <subcellularLocation>
        <location evidence="1">Cytoplasm</location>
    </subcellularLocation>
</comment>
<comment type="domain">
    <text evidence="1">The beta-hairpin motif is involved in DNA binding.</text>
</comment>
<comment type="similarity">
    <text evidence="1">Belongs to the UvrB family.</text>
</comment>
<sequence length="663" mass="75616">MIDKRDFKAFKLVSKYAPSGDQPQAIEALVDNIESGEKAQILLGATGTGKTYTMSQVISKVNKPTLVIAHNKTLAGQLYGEFKEFFPENAVEYFVSYYDYYQPEAYVPSSDTYIEKDSSVNDEIDKLRHSATSSLLERNDVIVVASVSCIYGLGSPKEYADSAVSLRPGQEISRDQLLNALVDIQFERNDIDFQRGRFRVRGDVVEVFPASRDEHAFRIEFFGDEIDRIREIESLTGKVLGDADHLVLFPATHFVTNDEHMEQSISKIQAELADQLKLFEAEGKLLEAQRLRQRTEYDIEMLREMGYTNGVENYSRHMDGRSAGEPPYTLLDFFPEDFLIMIDESHMTMGQIKGMYNGDKARKQMLVDYGFRLPSALDNRPLRREEFESHVHQIVYVSATPGDYEMEQTDTIVEQIIRPTGLLDPEVEVRPSMGQMDDLLGEINLRVERGERTFITTLTKKMAEDLTDYLKEMGVKVKYMHSDIKTLERTEIIRDLRLGVFDVLIGINLLREGIDVPEVSLVAILDADKEGFLRNERGLIQTIGRAARNADGHVIMYADRMTDSMQRAIDETARRRAIQMAYNEEHGIIPQTIKKDIRDLISISRAVEAKATEAETNYESMTRSERQEAIKQLQKNMQEAAELLDFELAAQLRDLILELKAID</sequence>
<gene>
    <name evidence="1" type="primary">uvrB</name>
    <name type="ordered locus">Sez_1273</name>
</gene>
<proteinExistence type="inferred from homology"/>
<dbReference type="EMBL" id="CP001129">
    <property type="protein sequence ID" value="ACG62611.1"/>
    <property type="molecule type" value="Genomic_DNA"/>
</dbReference>
<dbReference type="RefSeq" id="WP_012515876.1">
    <property type="nucleotide sequence ID" value="NC_011134.1"/>
</dbReference>
<dbReference type="SMR" id="B4U3P4"/>
<dbReference type="KEGG" id="sez:Sez_1273"/>
<dbReference type="HOGENOM" id="CLU_009621_2_1_9"/>
<dbReference type="Proteomes" id="UP000001873">
    <property type="component" value="Chromosome"/>
</dbReference>
<dbReference type="GO" id="GO:0005737">
    <property type="term" value="C:cytoplasm"/>
    <property type="evidence" value="ECO:0007669"/>
    <property type="project" value="UniProtKB-SubCell"/>
</dbReference>
<dbReference type="GO" id="GO:0009380">
    <property type="term" value="C:excinuclease repair complex"/>
    <property type="evidence" value="ECO:0007669"/>
    <property type="project" value="InterPro"/>
</dbReference>
<dbReference type="GO" id="GO:0005524">
    <property type="term" value="F:ATP binding"/>
    <property type="evidence" value="ECO:0007669"/>
    <property type="project" value="UniProtKB-UniRule"/>
</dbReference>
<dbReference type="GO" id="GO:0016887">
    <property type="term" value="F:ATP hydrolysis activity"/>
    <property type="evidence" value="ECO:0007669"/>
    <property type="project" value="InterPro"/>
</dbReference>
<dbReference type="GO" id="GO:0003677">
    <property type="term" value="F:DNA binding"/>
    <property type="evidence" value="ECO:0007669"/>
    <property type="project" value="UniProtKB-UniRule"/>
</dbReference>
<dbReference type="GO" id="GO:0009381">
    <property type="term" value="F:excinuclease ABC activity"/>
    <property type="evidence" value="ECO:0007669"/>
    <property type="project" value="UniProtKB-UniRule"/>
</dbReference>
<dbReference type="GO" id="GO:0004386">
    <property type="term" value="F:helicase activity"/>
    <property type="evidence" value="ECO:0007669"/>
    <property type="project" value="UniProtKB-KW"/>
</dbReference>
<dbReference type="GO" id="GO:0006289">
    <property type="term" value="P:nucleotide-excision repair"/>
    <property type="evidence" value="ECO:0007669"/>
    <property type="project" value="UniProtKB-UniRule"/>
</dbReference>
<dbReference type="GO" id="GO:0009432">
    <property type="term" value="P:SOS response"/>
    <property type="evidence" value="ECO:0007669"/>
    <property type="project" value="UniProtKB-UniRule"/>
</dbReference>
<dbReference type="CDD" id="cd17916">
    <property type="entry name" value="DEXHc_UvrB"/>
    <property type="match status" value="1"/>
</dbReference>
<dbReference type="CDD" id="cd18790">
    <property type="entry name" value="SF2_C_UvrB"/>
    <property type="match status" value="1"/>
</dbReference>
<dbReference type="Gene3D" id="3.40.50.300">
    <property type="entry name" value="P-loop containing nucleotide triphosphate hydrolases"/>
    <property type="match status" value="3"/>
</dbReference>
<dbReference type="Gene3D" id="4.10.860.10">
    <property type="entry name" value="UVR domain"/>
    <property type="match status" value="1"/>
</dbReference>
<dbReference type="HAMAP" id="MF_00204">
    <property type="entry name" value="UvrB"/>
    <property type="match status" value="1"/>
</dbReference>
<dbReference type="InterPro" id="IPR006935">
    <property type="entry name" value="Helicase/UvrB_N"/>
</dbReference>
<dbReference type="InterPro" id="IPR014001">
    <property type="entry name" value="Helicase_ATP-bd"/>
</dbReference>
<dbReference type="InterPro" id="IPR001650">
    <property type="entry name" value="Helicase_C-like"/>
</dbReference>
<dbReference type="InterPro" id="IPR027417">
    <property type="entry name" value="P-loop_NTPase"/>
</dbReference>
<dbReference type="InterPro" id="IPR001943">
    <property type="entry name" value="UVR_dom"/>
</dbReference>
<dbReference type="InterPro" id="IPR036876">
    <property type="entry name" value="UVR_dom_sf"/>
</dbReference>
<dbReference type="InterPro" id="IPR004807">
    <property type="entry name" value="UvrB"/>
</dbReference>
<dbReference type="InterPro" id="IPR041471">
    <property type="entry name" value="UvrB_inter"/>
</dbReference>
<dbReference type="InterPro" id="IPR024759">
    <property type="entry name" value="UvrB_YAD/RRR_dom"/>
</dbReference>
<dbReference type="NCBIfam" id="NF003673">
    <property type="entry name" value="PRK05298.1"/>
    <property type="match status" value="1"/>
</dbReference>
<dbReference type="NCBIfam" id="TIGR00631">
    <property type="entry name" value="uvrb"/>
    <property type="match status" value="1"/>
</dbReference>
<dbReference type="PANTHER" id="PTHR24029">
    <property type="entry name" value="UVRABC SYSTEM PROTEIN B"/>
    <property type="match status" value="1"/>
</dbReference>
<dbReference type="PANTHER" id="PTHR24029:SF0">
    <property type="entry name" value="UVRABC SYSTEM PROTEIN B"/>
    <property type="match status" value="1"/>
</dbReference>
<dbReference type="Pfam" id="PF00271">
    <property type="entry name" value="Helicase_C"/>
    <property type="match status" value="1"/>
</dbReference>
<dbReference type="Pfam" id="PF04851">
    <property type="entry name" value="ResIII"/>
    <property type="match status" value="1"/>
</dbReference>
<dbReference type="Pfam" id="PF02151">
    <property type="entry name" value="UVR"/>
    <property type="match status" value="1"/>
</dbReference>
<dbReference type="Pfam" id="PF12344">
    <property type="entry name" value="UvrB"/>
    <property type="match status" value="1"/>
</dbReference>
<dbReference type="Pfam" id="PF17757">
    <property type="entry name" value="UvrB_inter"/>
    <property type="match status" value="1"/>
</dbReference>
<dbReference type="SMART" id="SM00487">
    <property type="entry name" value="DEXDc"/>
    <property type="match status" value="1"/>
</dbReference>
<dbReference type="SMART" id="SM00490">
    <property type="entry name" value="HELICc"/>
    <property type="match status" value="1"/>
</dbReference>
<dbReference type="SUPFAM" id="SSF46600">
    <property type="entry name" value="C-terminal UvrC-binding domain of UvrB"/>
    <property type="match status" value="1"/>
</dbReference>
<dbReference type="SUPFAM" id="SSF52540">
    <property type="entry name" value="P-loop containing nucleoside triphosphate hydrolases"/>
    <property type="match status" value="2"/>
</dbReference>
<dbReference type="PROSITE" id="PS51192">
    <property type="entry name" value="HELICASE_ATP_BIND_1"/>
    <property type="match status" value="1"/>
</dbReference>
<dbReference type="PROSITE" id="PS51194">
    <property type="entry name" value="HELICASE_CTER"/>
    <property type="match status" value="1"/>
</dbReference>
<dbReference type="PROSITE" id="PS50151">
    <property type="entry name" value="UVR"/>
    <property type="match status" value="1"/>
</dbReference>
<evidence type="ECO:0000255" key="1">
    <source>
        <dbReference type="HAMAP-Rule" id="MF_00204"/>
    </source>
</evidence>
<protein>
    <recommendedName>
        <fullName evidence="1">UvrABC system protein B</fullName>
        <shortName evidence="1">Protein UvrB</shortName>
    </recommendedName>
    <alternativeName>
        <fullName evidence="1">Excinuclease ABC subunit B</fullName>
    </alternativeName>
</protein>
<name>UVRB_STREM</name>
<feature type="chain" id="PRO_1000099569" description="UvrABC system protein B">
    <location>
        <begin position="1"/>
        <end position="663"/>
    </location>
</feature>
<feature type="domain" description="Helicase ATP-binding" evidence="1">
    <location>
        <begin position="31"/>
        <end position="271"/>
    </location>
</feature>
<feature type="domain" description="Helicase C-terminal" evidence="1">
    <location>
        <begin position="435"/>
        <end position="601"/>
    </location>
</feature>
<feature type="domain" description="UVR" evidence="1">
    <location>
        <begin position="627"/>
        <end position="662"/>
    </location>
</feature>
<feature type="short sequence motif" description="Beta-hairpin">
    <location>
        <begin position="97"/>
        <end position="120"/>
    </location>
</feature>
<feature type="binding site" evidence="1">
    <location>
        <begin position="44"/>
        <end position="51"/>
    </location>
    <ligand>
        <name>ATP</name>
        <dbReference type="ChEBI" id="CHEBI:30616"/>
    </ligand>
</feature>
<organism>
    <name type="scientific">Streptococcus equi subsp. zooepidemicus (strain MGCS10565)</name>
    <dbReference type="NCBI Taxonomy" id="552526"/>
    <lineage>
        <taxon>Bacteria</taxon>
        <taxon>Bacillati</taxon>
        <taxon>Bacillota</taxon>
        <taxon>Bacilli</taxon>
        <taxon>Lactobacillales</taxon>
        <taxon>Streptococcaceae</taxon>
        <taxon>Streptococcus</taxon>
    </lineage>
</organism>
<accession>B4U3P4</accession>